<feature type="chain" id="PRO_0000384351" description="Mitochondrial distribution and morphology protein 34">
    <location>
        <begin position="1"/>
        <end position="615"/>
    </location>
</feature>
<feature type="domain" description="SMP-LTD" evidence="1">
    <location>
        <begin position="1"/>
        <end position="195"/>
    </location>
</feature>
<feature type="region of interest" description="Disordered" evidence="2">
    <location>
        <begin position="293"/>
        <end position="313"/>
    </location>
</feature>
<feature type="region of interest" description="Disordered" evidence="2">
    <location>
        <begin position="346"/>
        <end position="566"/>
    </location>
</feature>
<feature type="region of interest" description="Disordered" evidence="2">
    <location>
        <begin position="596"/>
        <end position="615"/>
    </location>
</feature>
<feature type="compositionally biased region" description="Polar residues" evidence="2">
    <location>
        <begin position="301"/>
        <end position="313"/>
    </location>
</feature>
<feature type="compositionally biased region" description="Low complexity" evidence="2">
    <location>
        <begin position="346"/>
        <end position="355"/>
    </location>
</feature>
<feature type="compositionally biased region" description="Basic residues" evidence="2">
    <location>
        <begin position="356"/>
        <end position="367"/>
    </location>
</feature>
<feature type="compositionally biased region" description="Polar residues" evidence="2">
    <location>
        <begin position="384"/>
        <end position="403"/>
    </location>
</feature>
<feature type="compositionally biased region" description="Polar residues" evidence="2">
    <location>
        <begin position="435"/>
        <end position="446"/>
    </location>
</feature>
<feature type="compositionally biased region" description="Polar residues" evidence="2">
    <location>
        <begin position="457"/>
        <end position="499"/>
    </location>
</feature>
<feature type="compositionally biased region" description="Low complexity" evidence="2">
    <location>
        <begin position="517"/>
        <end position="557"/>
    </location>
</feature>
<feature type="compositionally biased region" description="Basic and acidic residues" evidence="2">
    <location>
        <begin position="596"/>
        <end position="606"/>
    </location>
</feature>
<evidence type="ECO:0000255" key="1">
    <source>
        <dbReference type="HAMAP-Rule" id="MF_03105"/>
    </source>
</evidence>
<evidence type="ECO:0000256" key="2">
    <source>
        <dbReference type="SAM" id="MobiDB-lite"/>
    </source>
</evidence>
<proteinExistence type="inferred from homology"/>
<protein>
    <recommendedName>
        <fullName evidence="1">Mitochondrial distribution and morphology protein 34</fullName>
    </recommendedName>
</protein>
<reference key="1">
    <citation type="journal article" date="2003" name="Nature">
        <title>The genome sequence of the filamentous fungus Neurospora crassa.</title>
        <authorList>
            <person name="Galagan J.E."/>
            <person name="Calvo S.E."/>
            <person name="Borkovich K.A."/>
            <person name="Selker E.U."/>
            <person name="Read N.D."/>
            <person name="Jaffe D.B."/>
            <person name="FitzHugh W."/>
            <person name="Ma L.-J."/>
            <person name="Smirnov S."/>
            <person name="Purcell S."/>
            <person name="Rehman B."/>
            <person name="Elkins T."/>
            <person name="Engels R."/>
            <person name="Wang S."/>
            <person name="Nielsen C.B."/>
            <person name="Butler J."/>
            <person name="Endrizzi M."/>
            <person name="Qui D."/>
            <person name="Ianakiev P."/>
            <person name="Bell-Pedersen D."/>
            <person name="Nelson M.A."/>
            <person name="Werner-Washburne M."/>
            <person name="Selitrennikoff C.P."/>
            <person name="Kinsey J.A."/>
            <person name="Braun E.L."/>
            <person name="Zelter A."/>
            <person name="Schulte U."/>
            <person name="Kothe G.O."/>
            <person name="Jedd G."/>
            <person name="Mewes H.-W."/>
            <person name="Staben C."/>
            <person name="Marcotte E."/>
            <person name="Greenberg D."/>
            <person name="Roy A."/>
            <person name="Foley K."/>
            <person name="Naylor J."/>
            <person name="Stange-Thomann N."/>
            <person name="Barrett R."/>
            <person name="Gnerre S."/>
            <person name="Kamal M."/>
            <person name="Kamvysselis M."/>
            <person name="Mauceli E.W."/>
            <person name="Bielke C."/>
            <person name="Rudd S."/>
            <person name="Frishman D."/>
            <person name="Krystofova S."/>
            <person name="Rasmussen C."/>
            <person name="Metzenberg R.L."/>
            <person name="Perkins D.D."/>
            <person name="Kroken S."/>
            <person name="Cogoni C."/>
            <person name="Macino G."/>
            <person name="Catcheside D.E.A."/>
            <person name="Li W."/>
            <person name="Pratt R.J."/>
            <person name="Osmani S.A."/>
            <person name="DeSouza C.P.C."/>
            <person name="Glass N.L."/>
            <person name="Orbach M.J."/>
            <person name="Berglund J.A."/>
            <person name="Voelker R."/>
            <person name="Yarden O."/>
            <person name="Plamann M."/>
            <person name="Seiler S."/>
            <person name="Dunlap J.C."/>
            <person name="Radford A."/>
            <person name="Aramayo R."/>
            <person name="Natvig D.O."/>
            <person name="Alex L.A."/>
            <person name="Mannhaupt G."/>
            <person name="Ebbole D.J."/>
            <person name="Freitag M."/>
            <person name="Paulsen I."/>
            <person name="Sachs M.S."/>
            <person name="Lander E.S."/>
            <person name="Nusbaum C."/>
            <person name="Birren B.W."/>
        </authorList>
    </citation>
    <scope>NUCLEOTIDE SEQUENCE [LARGE SCALE GENOMIC DNA]</scope>
    <source>
        <strain>ATCC 24698 / 74-OR23-1A / CBS 708.71 / DSM 1257 / FGSC 987</strain>
    </source>
</reference>
<accession>Q7RZK9</accession>
<organism>
    <name type="scientific">Neurospora crassa (strain ATCC 24698 / 74-OR23-1A / CBS 708.71 / DSM 1257 / FGSC 987)</name>
    <dbReference type="NCBI Taxonomy" id="367110"/>
    <lineage>
        <taxon>Eukaryota</taxon>
        <taxon>Fungi</taxon>
        <taxon>Dikarya</taxon>
        <taxon>Ascomycota</taxon>
        <taxon>Pezizomycotina</taxon>
        <taxon>Sordariomycetes</taxon>
        <taxon>Sordariomycetidae</taxon>
        <taxon>Sordariales</taxon>
        <taxon>Sordariaceae</taxon>
        <taxon>Neurospora</taxon>
    </lineage>
</organism>
<name>MDM34_NEUCR</name>
<dbReference type="EMBL" id="CM002238">
    <property type="protein sequence ID" value="EAA28592.3"/>
    <property type="molecule type" value="Genomic_DNA"/>
</dbReference>
<dbReference type="RefSeq" id="XP_957828.3">
    <property type="nucleotide sequence ID" value="XM_952735.3"/>
</dbReference>
<dbReference type="STRING" id="367110.Q7RZK9"/>
<dbReference type="PaxDb" id="5141-EFNCRP00000000211"/>
<dbReference type="EnsemblFungi" id="EAA28592">
    <property type="protein sequence ID" value="EAA28592"/>
    <property type="gene ID" value="NCU00357"/>
</dbReference>
<dbReference type="GeneID" id="3873878"/>
<dbReference type="KEGG" id="ncr:NCU00357"/>
<dbReference type="VEuPathDB" id="FungiDB:NCU00357"/>
<dbReference type="HOGENOM" id="CLU_036502_1_0_1"/>
<dbReference type="InParanoid" id="Q7RZK9"/>
<dbReference type="OrthoDB" id="17927at2759"/>
<dbReference type="Proteomes" id="UP000001805">
    <property type="component" value="Chromosome 3, Linkage Group III"/>
</dbReference>
<dbReference type="GO" id="GO:0032865">
    <property type="term" value="C:ERMES complex"/>
    <property type="evidence" value="ECO:0000318"/>
    <property type="project" value="GO_Central"/>
</dbReference>
<dbReference type="GO" id="GO:0008289">
    <property type="term" value="F:lipid binding"/>
    <property type="evidence" value="ECO:0007669"/>
    <property type="project" value="UniProtKB-KW"/>
</dbReference>
<dbReference type="GO" id="GO:0000002">
    <property type="term" value="P:mitochondrial genome maintenance"/>
    <property type="evidence" value="ECO:0007669"/>
    <property type="project" value="UniProtKB-UniRule"/>
</dbReference>
<dbReference type="GO" id="GO:0007005">
    <property type="term" value="P:mitochondrion organization"/>
    <property type="evidence" value="ECO:0000318"/>
    <property type="project" value="GO_Central"/>
</dbReference>
<dbReference type="GO" id="GO:1990456">
    <property type="term" value="P:mitochondrion-endoplasmic reticulum membrane tethering"/>
    <property type="evidence" value="ECO:0000318"/>
    <property type="project" value="GO_Central"/>
</dbReference>
<dbReference type="GO" id="GO:0015914">
    <property type="term" value="P:phospholipid transport"/>
    <property type="evidence" value="ECO:0000318"/>
    <property type="project" value="GO_Central"/>
</dbReference>
<dbReference type="CDD" id="cd21673">
    <property type="entry name" value="SMP_Mdm34"/>
    <property type="match status" value="1"/>
</dbReference>
<dbReference type="HAMAP" id="MF_03105">
    <property type="entry name" value="Mdm34"/>
    <property type="match status" value="1"/>
</dbReference>
<dbReference type="InterPro" id="IPR027536">
    <property type="entry name" value="Mdm34"/>
</dbReference>
<dbReference type="InterPro" id="IPR031468">
    <property type="entry name" value="SMP_LBD"/>
</dbReference>
<dbReference type="PANTHER" id="PTHR28185">
    <property type="entry name" value="MITOCHONDRIAL DISTRIBUTION AND MORPHOLOGY PROTEIN 34"/>
    <property type="match status" value="1"/>
</dbReference>
<dbReference type="PANTHER" id="PTHR28185:SF1">
    <property type="entry name" value="MITOCHONDRIAL DISTRIBUTION AND MORPHOLOGY PROTEIN 34"/>
    <property type="match status" value="1"/>
</dbReference>
<dbReference type="PROSITE" id="PS51847">
    <property type="entry name" value="SMP"/>
    <property type="match status" value="1"/>
</dbReference>
<sequence length="615" mass="67733">MAFNFNWSPLTADAGFYERARDLLTTALNKSPKPPIIVDDIFVTELNLGSVPPDLEILEIGDLAEDRFRGIFKMCYSGDAFLTLATRVQANPLNTYISAKPSFTSPEPLTASSSLTIPLQITLSEIKLSAFIILVFSKQKGLTIVFRNDPLESLKVSSTFDSIQFVRDYLQKTIEMKLRDLIMDELPAIIHRLSLQLWCPDQVPKEDEEAKEESDAAINPLATPPLDAVDAHGHRLDPAEISSLSLDGGPETQSLFSQKNLEKMDALASAHRTSSLLTPNILEVVFRAWAGQSDKPDATATPASTPNLHRTSSYQGSVHTYTFSDNSSQASGHALSRPTLVSMGSATTGLSLGSGRHSKAGRKKKMRVVNLRSKTAVSEPVSEIGSTSSQAGDSHTEASTRTPMSEPVIPTTIREVPEDDLAASQSKVRFRPPTDATTSARASESSGPRAAVPSVPVTAQPSRATSSQEHVYTRQPSMFPSSPAPQTSAQEMPPSYSSRVSEKAESTASIYADAKGQQQQFQQQQQQQQQQQQQQQQQQQQQQQQQQQQQQQQQQQQWGRAGPQPDMSSVILEQAWITKIAGEIARRVYDEKNRNPAFWEDSHQHDIPPPAYEPR</sequence>
<comment type="function">
    <text evidence="1">Component of the ERMES/MDM complex, which serves as a molecular tether to connect the endoplasmic reticulum (ER) and mitochondria. Components of this complex are involved in the control of mitochondrial shape and protein biogenesis, and function in nonvesicular lipid trafficking between the ER and mitochondria. Mdm34 is required for the interaction of the ER-resident membrane protein mmm-1 and the outer mitochondrial membrane-resident beta-barrel protein mdm10.</text>
</comment>
<comment type="subunit">
    <text evidence="1">Component of the ER-mitochondria encounter structure (ERMES) or MDM complex, composed of mmm-1, mdm10, mdm12 and mdm34.</text>
</comment>
<comment type="subcellular location">
    <subcellularLocation>
        <location evidence="1">Mitochondrion outer membrane</location>
        <topology evidence="1">Multi-pass membrane protein</topology>
    </subcellularLocation>
    <text evidence="1">The ERMES/MDM complex localizes to a few discrete foci (around 10 per single cell), that represent mitochondria-endoplasmic reticulum junctions. These foci are often found next to mtDNA nucleoids.</text>
</comment>
<comment type="domain">
    <text evidence="1">Lacks alpha-helical transmembrane segments, suggesting that it resides in the membrane via beta-sheet conformations similar to those predicted for other outer membrane proteins and porin.</text>
</comment>
<comment type="domain">
    <text evidence="1">The SMP-LTD domain is a barrel-like domain that can bind various types of glycerophospholipids in its interior and mediate their transfer between two adjacent bilayers.</text>
</comment>
<comment type="similarity">
    <text evidence="1">Belongs to the MDM34 family.</text>
</comment>
<gene>
    <name evidence="1" type="primary">mdm34</name>
    <name type="ORF">NCU00357</name>
    <name type="ORF">NCU20066</name>
</gene>
<keyword id="KW-0445">Lipid transport</keyword>
<keyword id="KW-0446">Lipid-binding</keyword>
<keyword id="KW-0472">Membrane</keyword>
<keyword id="KW-0496">Mitochondrion</keyword>
<keyword id="KW-1000">Mitochondrion outer membrane</keyword>
<keyword id="KW-1185">Reference proteome</keyword>
<keyword id="KW-0812">Transmembrane</keyword>
<keyword id="KW-1134">Transmembrane beta strand</keyword>
<keyword id="KW-0813">Transport</keyword>